<proteinExistence type="evidence at transcript level"/>
<sequence length="326" mass="35534">GRIGRLVARVALQRDDVELVAVNDPFISTDYMTYMFKYDSVHGQWKHHELKVKDEKTLLFGEKSVRVFGIRNPEEIPWAEAGADFVVESTGVFTDKDKAAAHLKGGAKKVVISAPSKDAPMFVVGVNEKEYKPEYDIVSNASCTTNCLAPLAKVINDRFGIVEGLMTTVHSLTATQKTVDGPSMKDWRGGRATSFNIIPSSTGAAKAVGKVLPALNGKLTGMAFRVPTVDVSVVDLTVRLEKEASYDDIKAAIKEESEGKLKGILGFTEDDVVSTDFVGDSRSSIFDAKAGIALSKNFVKLVSWYDNEWGYSSRVIDLICHMASVA</sequence>
<name>G3PC_TOBAC</name>
<comment type="function">
    <text evidence="1">Key enzyme in glycolysis that catalyzes the first step of the pathway by converting D-glyceraldehyde 3-phosphate (G3P) into 3-phospho-D-glyceroyl phosphate. Essential for the maintenance of cellular ATP levels and carbohydrate metabolism (By similarity).</text>
</comment>
<comment type="catalytic activity">
    <reaction evidence="2">
        <text>D-glyceraldehyde 3-phosphate + phosphate + NAD(+) = (2R)-3-phospho-glyceroyl phosphate + NADH + H(+)</text>
        <dbReference type="Rhea" id="RHEA:10300"/>
        <dbReference type="ChEBI" id="CHEBI:15378"/>
        <dbReference type="ChEBI" id="CHEBI:43474"/>
        <dbReference type="ChEBI" id="CHEBI:57540"/>
        <dbReference type="ChEBI" id="CHEBI:57604"/>
        <dbReference type="ChEBI" id="CHEBI:57945"/>
        <dbReference type="ChEBI" id="CHEBI:59776"/>
        <dbReference type="EC" id="1.2.1.12"/>
    </reaction>
</comment>
<comment type="pathway">
    <text>Carbohydrate degradation; glycolysis; pyruvate from D-glyceraldehyde 3-phosphate: step 1/5.</text>
</comment>
<comment type="subcellular location">
    <subcellularLocation>
        <location evidence="1">Cytoplasm</location>
    </subcellularLocation>
</comment>
<comment type="miscellaneous">
    <text>Plants contain two types of GAPDH: cytosolic forms which participate in glycolysis and chloroplast forms which participate in photosynthesis. All the forms are encoded by distinct genes.</text>
</comment>
<comment type="similarity">
    <text evidence="3">Belongs to the glyceraldehyde-3-phosphate dehydrogenase family.</text>
</comment>
<keyword id="KW-0963">Cytoplasm</keyword>
<keyword id="KW-0324">Glycolysis</keyword>
<keyword id="KW-0520">NAD</keyword>
<keyword id="KW-0560">Oxidoreductase</keyword>
<keyword id="KW-1185">Reference proteome</keyword>
<gene>
    <name type="primary">GAPC</name>
</gene>
<accession>P09094</accession>
<feature type="chain" id="PRO_0000145620" description="Glyceraldehyde-3-phosphate dehydrogenase, cytosolic">
    <location>
        <begin position="1" status="less than"/>
        <end position="326"/>
    </location>
</feature>
<feature type="active site" description="Nucleophile" evidence="2">
    <location>
        <position position="143"/>
    </location>
</feature>
<feature type="binding site" evidence="1">
    <location>
        <begin position="2"/>
        <end position="3"/>
    </location>
    <ligand>
        <name>NAD(+)</name>
        <dbReference type="ChEBI" id="CHEBI:57540"/>
    </ligand>
</feature>
<feature type="binding site" evidence="1">
    <location>
        <position position="24"/>
    </location>
    <ligand>
        <name>NAD(+)</name>
        <dbReference type="ChEBI" id="CHEBI:57540"/>
    </ligand>
</feature>
<feature type="binding site" evidence="1">
    <location>
        <position position="71"/>
    </location>
    <ligand>
        <name>NAD(+)</name>
        <dbReference type="ChEBI" id="CHEBI:57540"/>
    </ligand>
</feature>
<feature type="binding site" evidence="1">
    <location>
        <begin position="142"/>
        <end position="144"/>
    </location>
    <ligand>
        <name>D-glyceraldehyde 3-phosphate</name>
        <dbReference type="ChEBI" id="CHEBI:59776"/>
    </ligand>
</feature>
<feature type="binding site" evidence="1">
    <location>
        <position position="173"/>
    </location>
    <ligand>
        <name>D-glyceraldehyde 3-phosphate</name>
        <dbReference type="ChEBI" id="CHEBI:59776"/>
    </ligand>
</feature>
<feature type="binding site" evidence="1">
    <location>
        <begin position="202"/>
        <end position="203"/>
    </location>
    <ligand>
        <name>D-glyceraldehyde 3-phosphate</name>
        <dbReference type="ChEBI" id="CHEBI:59776"/>
    </ligand>
</feature>
<feature type="binding site" evidence="1">
    <location>
        <position position="225"/>
    </location>
    <ligand>
        <name>D-glyceraldehyde 3-phosphate</name>
        <dbReference type="ChEBI" id="CHEBI:59776"/>
    </ligand>
</feature>
<feature type="binding site" evidence="1">
    <location>
        <position position="307"/>
    </location>
    <ligand>
        <name>NAD(+)</name>
        <dbReference type="ChEBI" id="CHEBI:57540"/>
    </ligand>
</feature>
<feature type="site" description="Activates thiol group during catalysis" evidence="1">
    <location>
        <position position="170"/>
    </location>
</feature>
<feature type="non-terminal residue">
    <location>
        <position position="1"/>
    </location>
</feature>
<protein>
    <recommendedName>
        <fullName>Glyceraldehyde-3-phosphate dehydrogenase, cytosolic</fullName>
        <ecNumber>1.2.1.12</ecNumber>
    </recommendedName>
</protein>
<dbReference type="EC" id="1.2.1.12"/>
<dbReference type="EMBL" id="M14419">
    <property type="protein sequence ID" value="AAA34077.1"/>
    <property type="molecule type" value="mRNA"/>
</dbReference>
<dbReference type="PIR" id="C24430">
    <property type="entry name" value="C24430"/>
</dbReference>
<dbReference type="SMR" id="P09094"/>
<dbReference type="STRING" id="4097.P09094"/>
<dbReference type="PaxDb" id="4097-P09094"/>
<dbReference type="UniPathway" id="UPA00109">
    <property type="reaction ID" value="UER00184"/>
</dbReference>
<dbReference type="Proteomes" id="UP000084051">
    <property type="component" value="Unplaced"/>
</dbReference>
<dbReference type="GO" id="GO:0005829">
    <property type="term" value="C:cytosol"/>
    <property type="evidence" value="ECO:0000318"/>
    <property type="project" value="GO_Central"/>
</dbReference>
<dbReference type="GO" id="GO:0004365">
    <property type="term" value="F:glyceraldehyde-3-phosphate dehydrogenase (NAD+) (phosphorylating) activity"/>
    <property type="evidence" value="ECO:0000318"/>
    <property type="project" value="GO_Central"/>
</dbReference>
<dbReference type="GO" id="GO:0051287">
    <property type="term" value="F:NAD binding"/>
    <property type="evidence" value="ECO:0007669"/>
    <property type="project" value="InterPro"/>
</dbReference>
<dbReference type="GO" id="GO:0050661">
    <property type="term" value="F:NADP binding"/>
    <property type="evidence" value="ECO:0007669"/>
    <property type="project" value="InterPro"/>
</dbReference>
<dbReference type="GO" id="GO:0006006">
    <property type="term" value="P:glucose metabolic process"/>
    <property type="evidence" value="ECO:0007669"/>
    <property type="project" value="InterPro"/>
</dbReference>
<dbReference type="GO" id="GO:0006096">
    <property type="term" value="P:glycolytic process"/>
    <property type="evidence" value="ECO:0000318"/>
    <property type="project" value="GO_Central"/>
</dbReference>
<dbReference type="CDD" id="cd18126">
    <property type="entry name" value="GAPDH_I_C"/>
    <property type="match status" value="1"/>
</dbReference>
<dbReference type="CDD" id="cd05214">
    <property type="entry name" value="GAPDH_I_N"/>
    <property type="match status" value="1"/>
</dbReference>
<dbReference type="FunFam" id="3.30.360.10:FF:000001">
    <property type="entry name" value="Glyceraldehyde-3-phosphate dehydrogenase"/>
    <property type="match status" value="1"/>
</dbReference>
<dbReference type="FunFam" id="3.40.50.720:FF:000020">
    <property type="entry name" value="Glyceraldehyde-3-phosphate dehydrogenase"/>
    <property type="match status" value="1"/>
</dbReference>
<dbReference type="Gene3D" id="3.30.360.10">
    <property type="entry name" value="Dihydrodipicolinate Reductase, domain 2"/>
    <property type="match status" value="1"/>
</dbReference>
<dbReference type="Gene3D" id="3.40.50.720">
    <property type="entry name" value="NAD(P)-binding Rossmann-like Domain"/>
    <property type="match status" value="1"/>
</dbReference>
<dbReference type="InterPro" id="IPR020831">
    <property type="entry name" value="GlycerAld/Erythrose_P_DH"/>
</dbReference>
<dbReference type="InterPro" id="IPR020830">
    <property type="entry name" value="GlycerAld_3-P_DH_AS"/>
</dbReference>
<dbReference type="InterPro" id="IPR020829">
    <property type="entry name" value="GlycerAld_3-P_DH_cat"/>
</dbReference>
<dbReference type="InterPro" id="IPR020828">
    <property type="entry name" value="GlycerAld_3-P_DH_NAD(P)-bd"/>
</dbReference>
<dbReference type="InterPro" id="IPR006424">
    <property type="entry name" value="Glyceraldehyde-3-P_DH_1"/>
</dbReference>
<dbReference type="InterPro" id="IPR036291">
    <property type="entry name" value="NAD(P)-bd_dom_sf"/>
</dbReference>
<dbReference type="NCBIfam" id="TIGR01534">
    <property type="entry name" value="GAPDH-I"/>
    <property type="match status" value="1"/>
</dbReference>
<dbReference type="PANTHER" id="PTHR10836">
    <property type="entry name" value="GLYCERALDEHYDE 3-PHOSPHATE DEHYDROGENASE"/>
    <property type="match status" value="1"/>
</dbReference>
<dbReference type="PANTHER" id="PTHR10836:SF112">
    <property type="entry name" value="GLYCERALDEHYDE-3-PHOSPHATE DEHYDROGENASE GAPC1, CYTOSOLIC-RELATED"/>
    <property type="match status" value="1"/>
</dbReference>
<dbReference type="Pfam" id="PF02800">
    <property type="entry name" value="Gp_dh_C"/>
    <property type="match status" value="1"/>
</dbReference>
<dbReference type="Pfam" id="PF00044">
    <property type="entry name" value="Gp_dh_N"/>
    <property type="match status" value="1"/>
</dbReference>
<dbReference type="PIRSF" id="PIRSF000149">
    <property type="entry name" value="GAP_DH"/>
    <property type="match status" value="1"/>
</dbReference>
<dbReference type="PRINTS" id="PR00078">
    <property type="entry name" value="G3PDHDRGNASE"/>
</dbReference>
<dbReference type="SMART" id="SM00846">
    <property type="entry name" value="Gp_dh_N"/>
    <property type="match status" value="1"/>
</dbReference>
<dbReference type="SUPFAM" id="SSF55347">
    <property type="entry name" value="Glyceraldehyde-3-phosphate dehydrogenase-like, C-terminal domain"/>
    <property type="match status" value="1"/>
</dbReference>
<dbReference type="SUPFAM" id="SSF51735">
    <property type="entry name" value="NAD(P)-binding Rossmann-fold domains"/>
    <property type="match status" value="1"/>
</dbReference>
<dbReference type="PROSITE" id="PS00071">
    <property type="entry name" value="GAPDH"/>
    <property type="match status" value="1"/>
</dbReference>
<evidence type="ECO:0000250" key="1"/>
<evidence type="ECO:0000255" key="2">
    <source>
        <dbReference type="PROSITE-ProRule" id="PRU10009"/>
    </source>
</evidence>
<evidence type="ECO:0000305" key="3"/>
<organism>
    <name type="scientific">Nicotiana tabacum</name>
    <name type="common">Common tobacco</name>
    <dbReference type="NCBI Taxonomy" id="4097"/>
    <lineage>
        <taxon>Eukaryota</taxon>
        <taxon>Viridiplantae</taxon>
        <taxon>Streptophyta</taxon>
        <taxon>Embryophyta</taxon>
        <taxon>Tracheophyta</taxon>
        <taxon>Spermatophyta</taxon>
        <taxon>Magnoliopsida</taxon>
        <taxon>eudicotyledons</taxon>
        <taxon>Gunneridae</taxon>
        <taxon>Pentapetalae</taxon>
        <taxon>asterids</taxon>
        <taxon>lamiids</taxon>
        <taxon>Solanales</taxon>
        <taxon>Solanaceae</taxon>
        <taxon>Nicotianoideae</taxon>
        <taxon>Nicotianeae</taxon>
        <taxon>Nicotiana</taxon>
    </lineage>
</organism>
<reference key="1">
    <citation type="journal article" date="1986" name="Cell">
        <title>Evidence in favor of the symbiotic origin of chloroplasts: primary structure and evolution of tobacco glyceraldehyde-3-phosphate dehydrogenases.</title>
        <authorList>
            <person name="Shih M.-C."/>
            <person name="Lazar G."/>
            <person name="Goodman H.M."/>
        </authorList>
    </citation>
    <scope>NUCLEOTIDE SEQUENCE [MRNA]</scope>
</reference>